<name>RL7_STAEQ</name>
<gene>
    <name evidence="1" type="primary">rplL</name>
    <name type="ordered locus">SERP0181</name>
</gene>
<accession>Q5HRL2</accession>
<keyword id="KW-1185">Reference proteome</keyword>
<keyword id="KW-0687">Ribonucleoprotein</keyword>
<keyword id="KW-0689">Ribosomal protein</keyword>
<protein>
    <recommendedName>
        <fullName evidence="1">Large ribosomal subunit protein bL12</fullName>
    </recommendedName>
    <alternativeName>
        <fullName evidence="2">50S ribosomal protein L7/L12</fullName>
    </alternativeName>
</protein>
<reference key="1">
    <citation type="journal article" date="2005" name="J. Bacteriol.">
        <title>Insights on evolution of virulence and resistance from the complete genome analysis of an early methicillin-resistant Staphylococcus aureus strain and a biofilm-producing methicillin-resistant Staphylococcus epidermidis strain.</title>
        <authorList>
            <person name="Gill S.R."/>
            <person name="Fouts D.E."/>
            <person name="Archer G.L."/>
            <person name="Mongodin E.F."/>
            <person name="DeBoy R.T."/>
            <person name="Ravel J."/>
            <person name="Paulsen I.T."/>
            <person name="Kolonay J.F."/>
            <person name="Brinkac L.M."/>
            <person name="Beanan M.J."/>
            <person name="Dodson R.J."/>
            <person name="Daugherty S.C."/>
            <person name="Madupu R."/>
            <person name="Angiuoli S.V."/>
            <person name="Durkin A.S."/>
            <person name="Haft D.H."/>
            <person name="Vamathevan J.J."/>
            <person name="Khouri H."/>
            <person name="Utterback T.R."/>
            <person name="Lee C."/>
            <person name="Dimitrov G."/>
            <person name="Jiang L."/>
            <person name="Qin H."/>
            <person name="Weidman J."/>
            <person name="Tran K."/>
            <person name="Kang K.H."/>
            <person name="Hance I.R."/>
            <person name="Nelson K.E."/>
            <person name="Fraser C.M."/>
        </authorList>
    </citation>
    <scope>NUCLEOTIDE SEQUENCE [LARGE SCALE GENOMIC DNA]</scope>
    <source>
        <strain>ATCC 35984 / DSM 28319 / BCRC 17069 / CCUG 31568 / BM 3577 / RP62A</strain>
    </source>
</reference>
<evidence type="ECO:0000255" key="1">
    <source>
        <dbReference type="HAMAP-Rule" id="MF_00368"/>
    </source>
</evidence>
<evidence type="ECO:0000305" key="2"/>
<dbReference type="EMBL" id="CP000029">
    <property type="protein sequence ID" value="AAW53578.1"/>
    <property type="molecule type" value="Genomic_DNA"/>
</dbReference>
<dbReference type="RefSeq" id="WP_001832283.1">
    <property type="nucleotide sequence ID" value="NC_002976.3"/>
</dbReference>
<dbReference type="SMR" id="Q5HRL2"/>
<dbReference type="STRING" id="176279.SERP0181"/>
<dbReference type="GeneID" id="50019531"/>
<dbReference type="KEGG" id="ser:SERP0181"/>
<dbReference type="eggNOG" id="COG0222">
    <property type="taxonomic scope" value="Bacteria"/>
</dbReference>
<dbReference type="HOGENOM" id="CLU_086499_3_2_9"/>
<dbReference type="Proteomes" id="UP000000531">
    <property type="component" value="Chromosome"/>
</dbReference>
<dbReference type="GO" id="GO:0022625">
    <property type="term" value="C:cytosolic large ribosomal subunit"/>
    <property type="evidence" value="ECO:0007669"/>
    <property type="project" value="TreeGrafter"/>
</dbReference>
<dbReference type="GO" id="GO:0003729">
    <property type="term" value="F:mRNA binding"/>
    <property type="evidence" value="ECO:0007669"/>
    <property type="project" value="TreeGrafter"/>
</dbReference>
<dbReference type="GO" id="GO:0003735">
    <property type="term" value="F:structural constituent of ribosome"/>
    <property type="evidence" value="ECO:0007669"/>
    <property type="project" value="InterPro"/>
</dbReference>
<dbReference type="GO" id="GO:0006412">
    <property type="term" value="P:translation"/>
    <property type="evidence" value="ECO:0007669"/>
    <property type="project" value="UniProtKB-UniRule"/>
</dbReference>
<dbReference type="CDD" id="cd00387">
    <property type="entry name" value="Ribosomal_L7_L12"/>
    <property type="match status" value="1"/>
</dbReference>
<dbReference type="FunFam" id="1.20.5.710:FF:000002">
    <property type="entry name" value="50S ribosomal protein L7/L12"/>
    <property type="match status" value="1"/>
</dbReference>
<dbReference type="FunFam" id="3.30.1390.10:FF:000001">
    <property type="entry name" value="50S ribosomal protein L7/L12"/>
    <property type="match status" value="1"/>
</dbReference>
<dbReference type="Gene3D" id="3.30.1390.10">
    <property type="match status" value="1"/>
</dbReference>
<dbReference type="Gene3D" id="1.20.5.710">
    <property type="entry name" value="Single helix bin"/>
    <property type="match status" value="1"/>
</dbReference>
<dbReference type="HAMAP" id="MF_00368">
    <property type="entry name" value="Ribosomal_bL12"/>
    <property type="match status" value="1"/>
</dbReference>
<dbReference type="InterPro" id="IPR000206">
    <property type="entry name" value="Ribosomal_bL12"/>
</dbReference>
<dbReference type="InterPro" id="IPR013823">
    <property type="entry name" value="Ribosomal_bL12_C"/>
</dbReference>
<dbReference type="InterPro" id="IPR014719">
    <property type="entry name" value="Ribosomal_bL12_C/ClpS-like"/>
</dbReference>
<dbReference type="InterPro" id="IPR008932">
    <property type="entry name" value="Ribosomal_bL12_oligo"/>
</dbReference>
<dbReference type="InterPro" id="IPR036235">
    <property type="entry name" value="Ribosomal_bL12_oligo_N_sf"/>
</dbReference>
<dbReference type="NCBIfam" id="TIGR00855">
    <property type="entry name" value="L12"/>
    <property type="match status" value="1"/>
</dbReference>
<dbReference type="PANTHER" id="PTHR45987">
    <property type="entry name" value="39S RIBOSOMAL PROTEIN L12"/>
    <property type="match status" value="1"/>
</dbReference>
<dbReference type="PANTHER" id="PTHR45987:SF4">
    <property type="entry name" value="LARGE RIBOSOMAL SUBUNIT PROTEIN BL12M"/>
    <property type="match status" value="1"/>
</dbReference>
<dbReference type="Pfam" id="PF00542">
    <property type="entry name" value="Ribosomal_L12"/>
    <property type="match status" value="1"/>
</dbReference>
<dbReference type="Pfam" id="PF16320">
    <property type="entry name" value="Ribosomal_L12_N"/>
    <property type="match status" value="1"/>
</dbReference>
<dbReference type="SUPFAM" id="SSF54736">
    <property type="entry name" value="ClpS-like"/>
    <property type="match status" value="1"/>
</dbReference>
<dbReference type="SUPFAM" id="SSF48300">
    <property type="entry name" value="Ribosomal protein L7/12, oligomerisation (N-terminal) domain"/>
    <property type="match status" value="1"/>
</dbReference>
<comment type="function">
    <text evidence="1">Forms part of the ribosomal stalk which helps the ribosome interact with GTP-bound translation factors. Is thus essential for accurate translation.</text>
</comment>
<comment type="subunit">
    <text evidence="1">Homodimer. Part of the ribosomal stalk of the 50S ribosomal subunit. Forms a multimeric L10(L12)X complex, where L10 forms an elongated spine to which 2 to 4 L12 dimers bind in a sequential fashion. Binds GTP-bound translation factors.</text>
</comment>
<comment type="similarity">
    <text evidence="1">Belongs to the bacterial ribosomal protein bL12 family.</text>
</comment>
<organism>
    <name type="scientific">Staphylococcus epidermidis (strain ATCC 35984 / DSM 28319 / BCRC 17069 / CCUG 31568 / BM 3577 / RP62A)</name>
    <dbReference type="NCBI Taxonomy" id="176279"/>
    <lineage>
        <taxon>Bacteria</taxon>
        <taxon>Bacillati</taxon>
        <taxon>Bacillota</taxon>
        <taxon>Bacilli</taxon>
        <taxon>Bacillales</taxon>
        <taxon>Staphylococcaceae</taxon>
        <taxon>Staphylococcus</taxon>
    </lineage>
</organism>
<feature type="chain" id="PRO_0000157582" description="Large ribosomal subunit protein bL12">
    <location>
        <begin position="1"/>
        <end position="122"/>
    </location>
</feature>
<proteinExistence type="inferred from homology"/>
<sequence>MANQEQIIEAIKEMSVLELNDLVKAIEEEFGVTAAAPVAAAGAAGGGDAAAEKTEFDVELTSAGSSKIKVVKAVKEATGLGLKDAKELVDGAPKVIKEAMPKEDAEKLKEQLEEVGASVELK</sequence>